<evidence type="ECO:0000255" key="1">
    <source>
        <dbReference type="HAMAP-Rule" id="MF_00203"/>
    </source>
</evidence>
<evidence type="ECO:0000256" key="2">
    <source>
        <dbReference type="SAM" id="MobiDB-lite"/>
    </source>
</evidence>
<sequence>MTSPDAPESRFEPKPILAQLPHLPGVYRYYDAQDAVLYVGKARDLKKRVSSYFTKTQLSPRIAMMITRIARIETTVTRSEAEALLLENNLIKALAPRYNILFRDDKSYPYLKLTGHRFPRMAYYRGAVDKKNQYFGPFPSAWAVRESIQILQRVFQLRTCEDSVFNNRTRPCLLHQIGRCSAPCVGAIGEEDYARDVDNASRFLLGRQGEVMGELERKMHAFAAELKFEQAAAVRNQMSSLAKVLHQQAIDVGGDSDVDILAVVAQGGRVCVNLAMVRGGRHLGDKAYFPAHVETALALAGDIEALAGEGAGDGVQAAAQPAQAPLATDADATDAAATEAKTVTAAAAARAGARTAQAAGARAAASAEGDVERRAEGETHARADAREAAALPDGAAAAQEADADVDAAPLETEVLEAFIAQHYLGNRVPPVLVVSHAPANRELIDLLVEQAGHKVAVVRQPQGQKRAWLTMAEQNARLALARLLSEQGSQQARTRSLADVLGYESDDLAQLRIECFDISHTMGEATQASCVVYHHHRMQSSEYRRYNIAGITPGDDYAAMRQVLTRRYEKMVEEAAAEASADEAAGIDGNAVHAAASAGRLPNVVLIDGGRGQVEIARQVFSELGLDISMLVGVAKGEGRKVGLETLIFADGRAPLELGKESAALMLVAQIRDEAHRFAITGMRAKRAKTRQTSRLEELEGVGAKRRQRLLARFGGLRGVVAASVDELASVEGISRALAEQIYRQLH</sequence>
<gene>
    <name evidence="1" type="primary">uvrC</name>
    <name type="ordered locus">BURPS668_2769</name>
</gene>
<accession>A3NBR9</accession>
<protein>
    <recommendedName>
        <fullName evidence="1">UvrABC system protein C</fullName>
        <shortName evidence="1">Protein UvrC</shortName>
    </recommendedName>
    <alternativeName>
        <fullName evidence="1">Excinuclease ABC subunit C</fullName>
    </alternativeName>
</protein>
<feature type="chain" id="PRO_1000077763" description="UvrABC system protein C">
    <location>
        <begin position="1"/>
        <end position="747"/>
    </location>
</feature>
<feature type="domain" description="GIY-YIG" evidence="1">
    <location>
        <begin position="22"/>
        <end position="100"/>
    </location>
</feature>
<feature type="domain" description="UVR" evidence="1">
    <location>
        <begin position="209"/>
        <end position="244"/>
    </location>
</feature>
<feature type="region of interest" description="Disordered" evidence="2">
    <location>
        <begin position="363"/>
        <end position="400"/>
    </location>
</feature>
<feature type="compositionally biased region" description="Basic and acidic residues" evidence="2">
    <location>
        <begin position="370"/>
        <end position="387"/>
    </location>
</feature>
<feature type="compositionally biased region" description="Low complexity" evidence="2">
    <location>
        <begin position="388"/>
        <end position="400"/>
    </location>
</feature>
<comment type="function">
    <text evidence="1">The UvrABC repair system catalyzes the recognition and processing of DNA lesions. UvrC both incises the 5' and 3' sides of the lesion. The N-terminal half is responsible for the 3' incision and the C-terminal half is responsible for the 5' incision.</text>
</comment>
<comment type="subunit">
    <text evidence="1">Interacts with UvrB in an incision complex.</text>
</comment>
<comment type="subcellular location">
    <subcellularLocation>
        <location evidence="1">Cytoplasm</location>
    </subcellularLocation>
</comment>
<comment type="similarity">
    <text evidence="1">Belongs to the UvrC family.</text>
</comment>
<organism>
    <name type="scientific">Burkholderia pseudomallei (strain 668)</name>
    <dbReference type="NCBI Taxonomy" id="320373"/>
    <lineage>
        <taxon>Bacteria</taxon>
        <taxon>Pseudomonadati</taxon>
        <taxon>Pseudomonadota</taxon>
        <taxon>Betaproteobacteria</taxon>
        <taxon>Burkholderiales</taxon>
        <taxon>Burkholderiaceae</taxon>
        <taxon>Burkholderia</taxon>
        <taxon>pseudomallei group</taxon>
    </lineage>
</organism>
<proteinExistence type="inferred from homology"/>
<name>UVRC_BURP6</name>
<reference key="1">
    <citation type="journal article" date="2010" name="Genome Biol. Evol.">
        <title>Continuing evolution of Burkholderia mallei through genome reduction and large-scale rearrangements.</title>
        <authorList>
            <person name="Losada L."/>
            <person name="Ronning C.M."/>
            <person name="DeShazer D."/>
            <person name="Woods D."/>
            <person name="Fedorova N."/>
            <person name="Kim H.S."/>
            <person name="Shabalina S.A."/>
            <person name="Pearson T.R."/>
            <person name="Brinkac L."/>
            <person name="Tan P."/>
            <person name="Nandi T."/>
            <person name="Crabtree J."/>
            <person name="Badger J."/>
            <person name="Beckstrom-Sternberg S."/>
            <person name="Saqib M."/>
            <person name="Schutzer S.E."/>
            <person name="Keim P."/>
            <person name="Nierman W.C."/>
        </authorList>
    </citation>
    <scope>NUCLEOTIDE SEQUENCE [LARGE SCALE GENOMIC DNA]</scope>
    <source>
        <strain>668</strain>
    </source>
</reference>
<keyword id="KW-0963">Cytoplasm</keyword>
<keyword id="KW-0227">DNA damage</keyword>
<keyword id="KW-0228">DNA excision</keyword>
<keyword id="KW-0234">DNA repair</keyword>
<keyword id="KW-0267">Excision nuclease</keyword>
<keyword id="KW-0742">SOS response</keyword>
<dbReference type="EMBL" id="CP000570">
    <property type="protein sequence ID" value="ABN83937.1"/>
    <property type="molecule type" value="Genomic_DNA"/>
</dbReference>
<dbReference type="RefSeq" id="WP_004527460.1">
    <property type="nucleotide sequence ID" value="NC_009074.1"/>
</dbReference>
<dbReference type="SMR" id="A3NBR9"/>
<dbReference type="GeneID" id="93061000"/>
<dbReference type="KEGG" id="bpd:BURPS668_2769"/>
<dbReference type="HOGENOM" id="CLU_014841_3_0_4"/>
<dbReference type="GO" id="GO:0005737">
    <property type="term" value="C:cytoplasm"/>
    <property type="evidence" value="ECO:0007669"/>
    <property type="project" value="UniProtKB-SubCell"/>
</dbReference>
<dbReference type="GO" id="GO:0009380">
    <property type="term" value="C:excinuclease repair complex"/>
    <property type="evidence" value="ECO:0007669"/>
    <property type="project" value="InterPro"/>
</dbReference>
<dbReference type="GO" id="GO:0003677">
    <property type="term" value="F:DNA binding"/>
    <property type="evidence" value="ECO:0007669"/>
    <property type="project" value="UniProtKB-UniRule"/>
</dbReference>
<dbReference type="GO" id="GO:0009381">
    <property type="term" value="F:excinuclease ABC activity"/>
    <property type="evidence" value="ECO:0007669"/>
    <property type="project" value="UniProtKB-UniRule"/>
</dbReference>
<dbReference type="GO" id="GO:0006289">
    <property type="term" value="P:nucleotide-excision repair"/>
    <property type="evidence" value="ECO:0007669"/>
    <property type="project" value="UniProtKB-UniRule"/>
</dbReference>
<dbReference type="GO" id="GO:0009432">
    <property type="term" value="P:SOS response"/>
    <property type="evidence" value="ECO:0007669"/>
    <property type="project" value="UniProtKB-UniRule"/>
</dbReference>
<dbReference type="CDD" id="cd10434">
    <property type="entry name" value="GIY-YIG_UvrC_Cho"/>
    <property type="match status" value="1"/>
</dbReference>
<dbReference type="FunFam" id="3.30.420.340:FF:000001">
    <property type="entry name" value="UvrABC system protein C"/>
    <property type="match status" value="1"/>
</dbReference>
<dbReference type="FunFam" id="3.40.1440.10:FF:000001">
    <property type="entry name" value="UvrABC system protein C"/>
    <property type="match status" value="1"/>
</dbReference>
<dbReference type="Gene3D" id="1.10.150.20">
    <property type="entry name" value="5' to 3' exonuclease, C-terminal subdomain"/>
    <property type="match status" value="1"/>
</dbReference>
<dbReference type="Gene3D" id="3.40.1440.10">
    <property type="entry name" value="GIY-YIG endonuclease"/>
    <property type="match status" value="1"/>
</dbReference>
<dbReference type="Gene3D" id="4.10.860.10">
    <property type="entry name" value="UVR domain"/>
    <property type="match status" value="1"/>
</dbReference>
<dbReference type="Gene3D" id="3.30.420.340">
    <property type="entry name" value="UvrC, RNAse H endonuclease domain"/>
    <property type="match status" value="1"/>
</dbReference>
<dbReference type="HAMAP" id="MF_00203">
    <property type="entry name" value="UvrC"/>
    <property type="match status" value="1"/>
</dbReference>
<dbReference type="InterPro" id="IPR000305">
    <property type="entry name" value="GIY-YIG_endonuc"/>
</dbReference>
<dbReference type="InterPro" id="IPR035901">
    <property type="entry name" value="GIY-YIG_endonuc_sf"/>
</dbReference>
<dbReference type="InterPro" id="IPR047296">
    <property type="entry name" value="GIY-YIG_UvrC_Cho"/>
</dbReference>
<dbReference type="InterPro" id="IPR003583">
    <property type="entry name" value="Hlx-hairpin-Hlx_DNA-bd_motif"/>
</dbReference>
<dbReference type="InterPro" id="IPR010994">
    <property type="entry name" value="RuvA_2-like"/>
</dbReference>
<dbReference type="InterPro" id="IPR001943">
    <property type="entry name" value="UVR_dom"/>
</dbReference>
<dbReference type="InterPro" id="IPR036876">
    <property type="entry name" value="UVR_dom_sf"/>
</dbReference>
<dbReference type="InterPro" id="IPR050066">
    <property type="entry name" value="UvrABC_protein_C"/>
</dbReference>
<dbReference type="InterPro" id="IPR004791">
    <property type="entry name" value="UvrC"/>
</dbReference>
<dbReference type="InterPro" id="IPR001162">
    <property type="entry name" value="UvrC_RNase_H_dom"/>
</dbReference>
<dbReference type="InterPro" id="IPR038476">
    <property type="entry name" value="UvrC_RNase_H_dom_sf"/>
</dbReference>
<dbReference type="NCBIfam" id="NF001824">
    <property type="entry name" value="PRK00558.1-5"/>
    <property type="match status" value="1"/>
</dbReference>
<dbReference type="NCBIfam" id="TIGR00194">
    <property type="entry name" value="uvrC"/>
    <property type="match status" value="1"/>
</dbReference>
<dbReference type="PANTHER" id="PTHR30562:SF1">
    <property type="entry name" value="UVRABC SYSTEM PROTEIN C"/>
    <property type="match status" value="1"/>
</dbReference>
<dbReference type="PANTHER" id="PTHR30562">
    <property type="entry name" value="UVRC/OXIDOREDUCTASE"/>
    <property type="match status" value="1"/>
</dbReference>
<dbReference type="Pfam" id="PF01541">
    <property type="entry name" value="GIY-YIG"/>
    <property type="match status" value="1"/>
</dbReference>
<dbReference type="Pfam" id="PF14520">
    <property type="entry name" value="HHH_5"/>
    <property type="match status" value="1"/>
</dbReference>
<dbReference type="Pfam" id="PF02151">
    <property type="entry name" value="UVR"/>
    <property type="match status" value="1"/>
</dbReference>
<dbReference type="Pfam" id="PF22920">
    <property type="entry name" value="UvrC_RNaseH"/>
    <property type="match status" value="2"/>
</dbReference>
<dbReference type="Pfam" id="PF08459">
    <property type="entry name" value="UvrC_RNaseH_dom"/>
    <property type="match status" value="1"/>
</dbReference>
<dbReference type="SMART" id="SM00465">
    <property type="entry name" value="GIYc"/>
    <property type="match status" value="1"/>
</dbReference>
<dbReference type="SMART" id="SM00278">
    <property type="entry name" value="HhH1"/>
    <property type="match status" value="2"/>
</dbReference>
<dbReference type="SUPFAM" id="SSF46600">
    <property type="entry name" value="C-terminal UvrC-binding domain of UvrB"/>
    <property type="match status" value="1"/>
</dbReference>
<dbReference type="SUPFAM" id="SSF82771">
    <property type="entry name" value="GIY-YIG endonuclease"/>
    <property type="match status" value="1"/>
</dbReference>
<dbReference type="SUPFAM" id="SSF47781">
    <property type="entry name" value="RuvA domain 2-like"/>
    <property type="match status" value="1"/>
</dbReference>
<dbReference type="PROSITE" id="PS50164">
    <property type="entry name" value="GIY_YIG"/>
    <property type="match status" value="1"/>
</dbReference>
<dbReference type="PROSITE" id="PS50151">
    <property type="entry name" value="UVR"/>
    <property type="match status" value="1"/>
</dbReference>
<dbReference type="PROSITE" id="PS50165">
    <property type="entry name" value="UVRC"/>
    <property type="match status" value="1"/>
</dbReference>